<sequence length="571" mass="61553">MSFEMSREQYASLYGPTTGDAIRLADTELFARIEKDLTAPGEEAVFGGGKVVRDGMGQNGRLGRDEDVPDLVITNVVVIDWTGICKADVAVRDGHIMRIGKAGNPHVMDGVDIVIGVATDVIAGEGKILTAGGIDSHIHFISPDQIETALVSGITTMIGGGTGPSESTKATTITPGAWNIHNMLRSFEQFPMNFGLLGKGHGSSVPAMAEQITAGAIGLKIHEDWGATPSSINTSLQVADEYDVQVAIHTDTLNEAGFVEDTRAAIAGRVIHTFHTEGAGGGHAPDIIELAQDPNILPASTNPTLPYTRNTLEEHLDMLMVCHHLNPGIPEDVAFADSRIRKETIAAEDVLQDMGIFSMTSSDSQAMGRVGEVVLRTWQVADSMKRQRGPLPEDEGTGGDNHRIRRYIAKYTINPATAHGISHAVGSVEEGKFADLVLWEPRFFGVKPDLILKGGQMVHGVMGDPNASIPTPQPRWYRRAFGAYGTAVAASSITFLSRAAIRAGVPETLGLRKVVRECRDIRTLTKADMKLNGETPPLRVDPQTYEVRVDGTPVTCEPQHVLPMAQRYFLF</sequence>
<reference key="1">
    <citation type="journal article" date="2008" name="J. Bacteriol.">
        <title>Complete genome sequence of the soil actinomycete Kocuria rhizophila.</title>
        <authorList>
            <person name="Takarada H."/>
            <person name="Sekine M."/>
            <person name="Kosugi H."/>
            <person name="Matsuo Y."/>
            <person name="Fujisawa T."/>
            <person name="Omata S."/>
            <person name="Kishi E."/>
            <person name="Shimizu A."/>
            <person name="Tsukatani N."/>
            <person name="Tanikawa S."/>
            <person name="Fujita N."/>
            <person name="Harayama S."/>
        </authorList>
    </citation>
    <scope>NUCLEOTIDE SEQUENCE [LARGE SCALE GENOMIC DNA]</scope>
    <source>
        <strain>ATCC 9341 / DSM 348 / NBRC 103217 / DC2201</strain>
    </source>
</reference>
<protein>
    <recommendedName>
        <fullName evidence="1">Urease subunit alpha</fullName>
        <ecNumber evidence="1">3.5.1.5</ecNumber>
    </recommendedName>
    <alternativeName>
        <fullName evidence="1">Urea amidohydrolase subunit alpha</fullName>
    </alternativeName>
</protein>
<accession>B2GI06</accession>
<comment type="catalytic activity">
    <reaction evidence="1">
        <text>urea + 2 H2O + H(+) = hydrogencarbonate + 2 NH4(+)</text>
        <dbReference type="Rhea" id="RHEA:20557"/>
        <dbReference type="ChEBI" id="CHEBI:15377"/>
        <dbReference type="ChEBI" id="CHEBI:15378"/>
        <dbReference type="ChEBI" id="CHEBI:16199"/>
        <dbReference type="ChEBI" id="CHEBI:17544"/>
        <dbReference type="ChEBI" id="CHEBI:28938"/>
        <dbReference type="EC" id="3.5.1.5"/>
    </reaction>
</comment>
<comment type="cofactor">
    <cofactor evidence="1">
        <name>Ni cation</name>
        <dbReference type="ChEBI" id="CHEBI:25516"/>
    </cofactor>
    <text evidence="1">Binds 2 nickel ions per subunit.</text>
</comment>
<comment type="pathway">
    <text evidence="1">Nitrogen metabolism; urea degradation; CO(2) and NH(3) from urea (urease route): step 1/1.</text>
</comment>
<comment type="subunit">
    <text evidence="1">Heterotrimer of UreA (gamma), UreB (beta) and UreC (alpha) subunits. Three heterotrimers associate to form the active enzyme.</text>
</comment>
<comment type="subcellular location">
    <subcellularLocation>
        <location evidence="1">Cytoplasm</location>
    </subcellularLocation>
</comment>
<comment type="PTM">
    <text evidence="1">Carboxylation allows a single lysine to coordinate two nickel ions.</text>
</comment>
<comment type="similarity">
    <text evidence="1">Belongs to the metallo-dependent hydrolases superfamily. Urease alpha subunit family.</text>
</comment>
<dbReference type="EC" id="3.5.1.5" evidence="1"/>
<dbReference type="EMBL" id="AP009152">
    <property type="protein sequence ID" value="BAG30518.1"/>
    <property type="molecule type" value="Genomic_DNA"/>
</dbReference>
<dbReference type="RefSeq" id="WP_012399239.1">
    <property type="nucleotide sequence ID" value="NC_010617.1"/>
</dbReference>
<dbReference type="SMR" id="B2GI06"/>
<dbReference type="STRING" id="378753.KRH_21710"/>
<dbReference type="MEROPS" id="M38.982"/>
<dbReference type="KEGG" id="krh:KRH_21710"/>
<dbReference type="eggNOG" id="COG0804">
    <property type="taxonomic scope" value="Bacteria"/>
</dbReference>
<dbReference type="HOGENOM" id="CLU_000980_0_0_11"/>
<dbReference type="OrthoDB" id="9802793at2"/>
<dbReference type="UniPathway" id="UPA00258">
    <property type="reaction ID" value="UER00370"/>
</dbReference>
<dbReference type="Proteomes" id="UP000008838">
    <property type="component" value="Chromosome"/>
</dbReference>
<dbReference type="GO" id="GO:0005737">
    <property type="term" value="C:cytoplasm"/>
    <property type="evidence" value="ECO:0007669"/>
    <property type="project" value="UniProtKB-SubCell"/>
</dbReference>
<dbReference type="GO" id="GO:0016151">
    <property type="term" value="F:nickel cation binding"/>
    <property type="evidence" value="ECO:0007669"/>
    <property type="project" value="UniProtKB-UniRule"/>
</dbReference>
<dbReference type="GO" id="GO:0009039">
    <property type="term" value="F:urease activity"/>
    <property type="evidence" value="ECO:0007669"/>
    <property type="project" value="UniProtKB-UniRule"/>
</dbReference>
<dbReference type="GO" id="GO:0043419">
    <property type="term" value="P:urea catabolic process"/>
    <property type="evidence" value="ECO:0007669"/>
    <property type="project" value="UniProtKB-UniRule"/>
</dbReference>
<dbReference type="CDD" id="cd00375">
    <property type="entry name" value="Urease_alpha"/>
    <property type="match status" value="1"/>
</dbReference>
<dbReference type="Gene3D" id="3.20.20.140">
    <property type="entry name" value="Metal-dependent hydrolases"/>
    <property type="match status" value="1"/>
</dbReference>
<dbReference type="Gene3D" id="2.30.40.10">
    <property type="entry name" value="Urease, subunit C, domain 1"/>
    <property type="match status" value="1"/>
</dbReference>
<dbReference type="HAMAP" id="MF_01953">
    <property type="entry name" value="Urease_alpha"/>
    <property type="match status" value="1"/>
</dbReference>
<dbReference type="InterPro" id="IPR006680">
    <property type="entry name" value="Amidohydro-rel"/>
</dbReference>
<dbReference type="InterPro" id="IPR011059">
    <property type="entry name" value="Metal-dep_hydrolase_composite"/>
</dbReference>
<dbReference type="InterPro" id="IPR032466">
    <property type="entry name" value="Metal_Hydrolase"/>
</dbReference>
<dbReference type="InterPro" id="IPR011612">
    <property type="entry name" value="Urease_alpha_N_dom"/>
</dbReference>
<dbReference type="InterPro" id="IPR050112">
    <property type="entry name" value="Urease_alpha_subunit"/>
</dbReference>
<dbReference type="InterPro" id="IPR017950">
    <property type="entry name" value="Urease_AS"/>
</dbReference>
<dbReference type="InterPro" id="IPR005848">
    <property type="entry name" value="Urease_asu"/>
</dbReference>
<dbReference type="InterPro" id="IPR017951">
    <property type="entry name" value="Urease_asu_c"/>
</dbReference>
<dbReference type="InterPro" id="IPR029754">
    <property type="entry name" value="Urease_Ni-bd"/>
</dbReference>
<dbReference type="NCBIfam" id="NF009686">
    <property type="entry name" value="PRK13207.1"/>
    <property type="match status" value="1"/>
</dbReference>
<dbReference type="NCBIfam" id="TIGR01792">
    <property type="entry name" value="urease_alph"/>
    <property type="match status" value="1"/>
</dbReference>
<dbReference type="PANTHER" id="PTHR43440">
    <property type="entry name" value="UREASE"/>
    <property type="match status" value="1"/>
</dbReference>
<dbReference type="PANTHER" id="PTHR43440:SF1">
    <property type="entry name" value="UREASE"/>
    <property type="match status" value="1"/>
</dbReference>
<dbReference type="Pfam" id="PF01979">
    <property type="entry name" value="Amidohydro_1"/>
    <property type="match status" value="1"/>
</dbReference>
<dbReference type="Pfam" id="PF00449">
    <property type="entry name" value="Urease_alpha"/>
    <property type="match status" value="1"/>
</dbReference>
<dbReference type="PRINTS" id="PR01752">
    <property type="entry name" value="UREASE"/>
</dbReference>
<dbReference type="SUPFAM" id="SSF51338">
    <property type="entry name" value="Composite domain of metallo-dependent hydrolases"/>
    <property type="match status" value="1"/>
</dbReference>
<dbReference type="SUPFAM" id="SSF51556">
    <property type="entry name" value="Metallo-dependent hydrolases"/>
    <property type="match status" value="1"/>
</dbReference>
<dbReference type="PROSITE" id="PS01120">
    <property type="entry name" value="UREASE_1"/>
    <property type="match status" value="1"/>
</dbReference>
<dbReference type="PROSITE" id="PS00145">
    <property type="entry name" value="UREASE_2"/>
    <property type="match status" value="1"/>
</dbReference>
<dbReference type="PROSITE" id="PS51368">
    <property type="entry name" value="UREASE_3"/>
    <property type="match status" value="1"/>
</dbReference>
<organism>
    <name type="scientific">Kocuria rhizophila (strain ATCC 9341 / DSM 348 / NBRC 103217 / DC2201)</name>
    <dbReference type="NCBI Taxonomy" id="378753"/>
    <lineage>
        <taxon>Bacteria</taxon>
        <taxon>Bacillati</taxon>
        <taxon>Actinomycetota</taxon>
        <taxon>Actinomycetes</taxon>
        <taxon>Micrococcales</taxon>
        <taxon>Micrococcaceae</taxon>
        <taxon>Kocuria</taxon>
    </lineage>
</organism>
<keyword id="KW-0963">Cytoplasm</keyword>
<keyword id="KW-0378">Hydrolase</keyword>
<keyword id="KW-0479">Metal-binding</keyword>
<keyword id="KW-0533">Nickel</keyword>
<keyword id="KW-1185">Reference proteome</keyword>
<proteinExistence type="inferred from homology"/>
<gene>
    <name evidence="1" type="primary">ureC</name>
    <name type="ordered locus">KRH_21710</name>
</gene>
<evidence type="ECO:0000255" key="1">
    <source>
        <dbReference type="HAMAP-Rule" id="MF_01953"/>
    </source>
</evidence>
<name>URE1_KOCRD</name>
<feature type="chain" id="PRO_1000188879" description="Urease subunit alpha">
    <location>
        <begin position="1"/>
        <end position="571"/>
    </location>
</feature>
<feature type="domain" description="Urease" evidence="1">
    <location>
        <begin position="132"/>
        <end position="571"/>
    </location>
</feature>
<feature type="active site" description="Proton donor" evidence="1">
    <location>
        <position position="323"/>
    </location>
</feature>
<feature type="binding site" evidence="1">
    <location>
        <position position="137"/>
    </location>
    <ligand>
        <name>Ni(2+)</name>
        <dbReference type="ChEBI" id="CHEBI:49786"/>
        <label>1</label>
    </ligand>
</feature>
<feature type="binding site" evidence="1">
    <location>
        <position position="139"/>
    </location>
    <ligand>
        <name>Ni(2+)</name>
        <dbReference type="ChEBI" id="CHEBI:49786"/>
        <label>1</label>
    </ligand>
</feature>
<feature type="binding site" description="via carbamate group" evidence="1">
    <location>
        <position position="220"/>
    </location>
    <ligand>
        <name>Ni(2+)</name>
        <dbReference type="ChEBI" id="CHEBI:49786"/>
        <label>1</label>
    </ligand>
</feature>
<feature type="binding site" description="via carbamate group" evidence="1">
    <location>
        <position position="220"/>
    </location>
    <ligand>
        <name>Ni(2+)</name>
        <dbReference type="ChEBI" id="CHEBI:49786"/>
        <label>2</label>
    </ligand>
</feature>
<feature type="binding site" evidence="1">
    <location>
        <position position="222"/>
    </location>
    <ligand>
        <name>substrate</name>
    </ligand>
</feature>
<feature type="binding site" evidence="1">
    <location>
        <position position="249"/>
    </location>
    <ligand>
        <name>Ni(2+)</name>
        <dbReference type="ChEBI" id="CHEBI:49786"/>
        <label>2</label>
    </ligand>
</feature>
<feature type="binding site" evidence="1">
    <location>
        <position position="275"/>
    </location>
    <ligand>
        <name>Ni(2+)</name>
        <dbReference type="ChEBI" id="CHEBI:49786"/>
        <label>2</label>
    </ligand>
</feature>
<feature type="binding site" evidence="1">
    <location>
        <position position="363"/>
    </location>
    <ligand>
        <name>Ni(2+)</name>
        <dbReference type="ChEBI" id="CHEBI:49786"/>
        <label>1</label>
    </ligand>
</feature>
<feature type="modified residue" description="N6-carboxylysine" evidence="1">
    <location>
        <position position="220"/>
    </location>
</feature>